<accession>P45121</accession>
<dbReference type="EC" id="1.2.1.41" evidence="1"/>
<dbReference type="EMBL" id="L42023">
    <property type="protein sequence ID" value="AAC22892.1"/>
    <property type="molecule type" value="Genomic_DNA"/>
</dbReference>
<dbReference type="PIR" id="D64112">
    <property type="entry name" value="D64112"/>
</dbReference>
<dbReference type="RefSeq" id="NP_439395.1">
    <property type="nucleotide sequence ID" value="NC_000907.1"/>
</dbReference>
<dbReference type="SMR" id="P45121"/>
<dbReference type="STRING" id="71421.HI_1239"/>
<dbReference type="EnsemblBacteria" id="AAC22892">
    <property type="protein sequence ID" value="AAC22892"/>
    <property type="gene ID" value="HI_1239"/>
</dbReference>
<dbReference type="KEGG" id="hin:HI_1239"/>
<dbReference type="PATRIC" id="fig|71421.8.peg.1291"/>
<dbReference type="eggNOG" id="COG0014">
    <property type="taxonomic scope" value="Bacteria"/>
</dbReference>
<dbReference type="HOGENOM" id="CLU_030231_0_0_6"/>
<dbReference type="OrthoDB" id="9809970at2"/>
<dbReference type="PhylomeDB" id="P45121"/>
<dbReference type="BioCyc" id="HINF71421:G1GJ1-1269-MONOMER"/>
<dbReference type="UniPathway" id="UPA00098">
    <property type="reaction ID" value="UER00360"/>
</dbReference>
<dbReference type="Proteomes" id="UP000000579">
    <property type="component" value="Chromosome"/>
</dbReference>
<dbReference type="GO" id="GO:0005737">
    <property type="term" value="C:cytoplasm"/>
    <property type="evidence" value="ECO:0007669"/>
    <property type="project" value="UniProtKB-SubCell"/>
</dbReference>
<dbReference type="GO" id="GO:0004350">
    <property type="term" value="F:glutamate-5-semialdehyde dehydrogenase activity"/>
    <property type="evidence" value="ECO:0000318"/>
    <property type="project" value="GO_Central"/>
</dbReference>
<dbReference type="GO" id="GO:0050661">
    <property type="term" value="F:NADP binding"/>
    <property type="evidence" value="ECO:0007669"/>
    <property type="project" value="InterPro"/>
</dbReference>
<dbReference type="GO" id="GO:0055129">
    <property type="term" value="P:L-proline biosynthetic process"/>
    <property type="evidence" value="ECO:0007669"/>
    <property type="project" value="UniProtKB-UniRule"/>
</dbReference>
<dbReference type="CDD" id="cd07079">
    <property type="entry name" value="ALDH_F18-19_ProA-GPR"/>
    <property type="match status" value="1"/>
</dbReference>
<dbReference type="FunFam" id="3.40.309.10:FF:000028">
    <property type="entry name" value="Gamma-glutamyl phosphate reductase"/>
    <property type="match status" value="1"/>
</dbReference>
<dbReference type="Gene3D" id="3.40.605.10">
    <property type="entry name" value="Aldehyde Dehydrogenase, Chain A, domain 1"/>
    <property type="match status" value="1"/>
</dbReference>
<dbReference type="Gene3D" id="3.40.309.10">
    <property type="entry name" value="Aldehyde Dehydrogenase, Chain A, domain 2"/>
    <property type="match status" value="1"/>
</dbReference>
<dbReference type="HAMAP" id="MF_00412">
    <property type="entry name" value="ProA"/>
    <property type="match status" value="1"/>
</dbReference>
<dbReference type="InterPro" id="IPR016161">
    <property type="entry name" value="Ald_DH/histidinol_DH"/>
</dbReference>
<dbReference type="InterPro" id="IPR016163">
    <property type="entry name" value="Ald_DH_C"/>
</dbReference>
<dbReference type="InterPro" id="IPR016162">
    <property type="entry name" value="Ald_DH_N"/>
</dbReference>
<dbReference type="InterPro" id="IPR015590">
    <property type="entry name" value="Aldehyde_DH_dom"/>
</dbReference>
<dbReference type="InterPro" id="IPR020593">
    <property type="entry name" value="G-glutamylP_reductase_CS"/>
</dbReference>
<dbReference type="InterPro" id="IPR012134">
    <property type="entry name" value="Glu-5-SA_DH"/>
</dbReference>
<dbReference type="InterPro" id="IPR000965">
    <property type="entry name" value="GPR_dom"/>
</dbReference>
<dbReference type="NCBIfam" id="NF001221">
    <property type="entry name" value="PRK00197.1"/>
    <property type="match status" value="1"/>
</dbReference>
<dbReference type="NCBIfam" id="TIGR00407">
    <property type="entry name" value="proA"/>
    <property type="match status" value="1"/>
</dbReference>
<dbReference type="PANTHER" id="PTHR11063:SF8">
    <property type="entry name" value="DELTA-1-PYRROLINE-5-CARBOXYLATE SYNTHASE"/>
    <property type="match status" value="1"/>
</dbReference>
<dbReference type="PANTHER" id="PTHR11063">
    <property type="entry name" value="GLUTAMATE SEMIALDEHYDE DEHYDROGENASE"/>
    <property type="match status" value="1"/>
</dbReference>
<dbReference type="Pfam" id="PF00171">
    <property type="entry name" value="Aldedh"/>
    <property type="match status" value="1"/>
</dbReference>
<dbReference type="PIRSF" id="PIRSF000151">
    <property type="entry name" value="GPR"/>
    <property type="match status" value="1"/>
</dbReference>
<dbReference type="SUPFAM" id="SSF53720">
    <property type="entry name" value="ALDH-like"/>
    <property type="match status" value="1"/>
</dbReference>
<dbReference type="PROSITE" id="PS01223">
    <property type="entry name" value="PROA"/>
    <property type="match status" value="1"/>
</dbReference>
<proteinExistence type="inferred from homology"/>
<gene>
    <name evidence="1" type="primary">proA</name>
    <name type="ordered locus">HI_1239</name>
</gene>
<protein>
    <recommendedName>
        <fullName evidence="1">Gamma-glutamyl phosphate reductase</fullName>
        <shortName evidence="1">GPR</shortName>
        <ecNumber evidence="1">1.2.1.41</ecNumber>
    </recommendedName>
    <alternativeName>
        <fullName evidence="1">Glutamate-5-semialdehyde dehydrogenase</fullName>
    </alternativeName>
    <alternativeName>
        <fullName evidence="1">Glutamyl-gamma-semialdehyde dehydrogenase</fullName>
        <shortName evidence="1">GSA dehydrogenase</shortName>
    </alternativeName>
</protein>
<name>PROA_HAEIN</name>
<sequence>MLEQMGKQAKDAAFILAQLTTAEKNCALSIIAEQLEQQAPLILAENAKDIELAKQNGLSDALIDRLLLTQERLQGIANDVRHVISLADPVGKIIDGGTLDSGLKIERVRTPLGVIGTIYEARPNVTIDVASLCLKTGNAVILRGGKETQFSNKILIEVVQNALEQAGLPKFAVQAITDPNRELVMQLLKLDRYVDMIIPRGGSGLHELCKQHSTIPVIVGGVGVCHTFVEKSADQNKAIFVIDNAKTQRPSTCNTLETLLVQHSIAEEFLPKLVSHLSAKNVKYHAKSTALNILKQAGANVCEVTEKELRKEWGSLDLNVVVVEDIHAAIEHIRQYGTQHSESILTSSQSLARQFINQVDAAAVYVNASTRFTDGGQFGLGAEVAVSTQKLHARGPMGLEALTSYKWVCEGEYTVRK</sequence>
<evidence type="ECO:0000255" key="1">
    <source>
        <dbReference type="HAMAP-Rule" id="MF_00412"/>
    </source>
</evidence>
<keyword id="KW-0028">Amino-acid biosynthesis</keyword>
<keyword id="KW-0963">Cytoplasm</keyword>
<keyword id="KW-0521">NADP</keyword>
<keyword id="KW-0560">Oxidoreductase</keyword>
<keyword id="KW-0641">Proline biosynthesis</keyword>
<keyword id="KW-1185">Reference proteome</keyword>
<feature type="chain" id="PRO_0000189732" description="Gamma-glutamyl phosphate reductase">
    <location>
        <begin position="1"/>
        <end position="417"/>
    </location>
</feature>
<comment type="function">
    <text evidence="1">Catalyzes the NADPH-dependent reduction of L-glutamate 5-phosphate into L-glutamate 5-semialdehyde and phosphate. The product spontaneously undergoes cyclization to form 1-pyrroline-5-carboxylate.</text>
</comment>
<comment type="catalytic activity">
    <reaction evidence="1">
        <text>L-glutamate 5-semialdehyde + phosphate + NADP(+) = L-glutamyl 5-phosphate + NADPH + H(+)</text>
        <dbReference type="Rhea" id="RHEA:19541"/>
        <dbReference type="ChEBI" id="CHEBI:15378"/>
        <dbReference type="ChEBI" id="CHEBI:43474"/>
        <dbReference type="ChEBI" id="CHEBI:57783"/>
        <dbReference type="ChEBI" id="CHEBI:58066"/>
        <dbReference type="ChEBI" id="CHEBI:58274"/>
        <dbReference type="ChEBI" id="CHEBI:58349"/>
        <dbReference type="EC" id="1.2.1.41"/>
    </reaction>
</comment>
<comment type="pathway">
    <text evidence="1">Amino-acid biosynthesis; L-proline biosynthesis; L-glutamate 5-semialdehyde from L-glutamate: step 2/2.</text>
</comment>
<comment type="subcellular location">
    <subcellularLocation>
        <location evidence="1">Cytoplasm</location>
    </subcellularLocation>
</comment>
<comment type="similarity">
    <text evidence="1">Belongs to the gamma-glutamyl phosphate reductase family.</text>
</comment>
<reference key="1">
    <citation type="journal article" date="1995" name="Science">
        <title>Whole-genome random sequencing and assembly of Haemophilus influenzae Rd.</title>
        <authorList>
            <person name="Fleischmann R.D."/>
            <person name="Adams M.D."/>
            <person name="White O."/>
            <person name="Clayton R.A."/>
            <person name="Kirkness E.F."/>
            <person name="Kerlavage A.R."/>
            <person name="Bult C.J."/>
            <person name="Tomb J.-F."/>
            <person name="Dougherty B.A."/>
            <person name="Merrick J.M."/>
            <person name="McKenney K."/>
            <person name="Sutton G.G."/>
            <person name="FitzHugh W."/>
            <person name="Fields C.A."/>
            <person name="Gocayne J.D."/>
            <person name="Scott J.D."/>
            <person name="Shirley R."/>
            <person name="Liu L.-I."/>
            <person name="Glodek A."/>
            <person name="Kelley J.M."/>
            <person name="Weidman J.F."/>
            <person name="Phillips C.A."/>
            <person name="Spriggs T."/>
            <person name="Hedblom E."/>
            <person name="Cotton M.D."/>
            <person name="Utterback T.R."/>
            <person name="Hanna M.C."/>
            <person name="Nguyen D.T."/>
            <person name="Saudek D.M."/>
            <person name="Brandon R.C."/>
            <person name="Fine L.D."/>
            <person name="Fritchman J.L."/>
            <person name="Fuhrmann J.L."/>
            <person name="Geoghagen N.S.M."/>
            <person name="Gnehm C.L."/>
            <person name="McDonald L.A."/>
            <person name="Small K.V."/>
            <person name="Fraser C.M."/>
            <person name="Smith H.O."/>
            <person name="Venter J.C."/>
        </authorList>
    </citation>
    <scope>NUCLEOTIDE SEQUENCE [LARGE SCALE GENOMIC DNA]</scope>
    <source>
        <strain>ATCC 51907 / DSM 11121 / KW20 / Rd</strain>
    </source>
</reference>
<organism>
    <name type="scientific">Haemophilus influenzae (strain ATCC 51907 / DSM 11121 / KW20 / Rd)</name>
    <dbReference type="NCBI Taxonomy" id="71421"/>
    <lineage>
        <taxon>Bacteria</taxon>
        <taxon>Pseudomonadati</taxon>
        <taxon>Pseudomonadota</taxon>
        <taxon>Gammaproteobacteria</taxon>
        <taxon>Pasteurellales</taxon>
        <taxon>Pasteurellaceae</taxon>
        <taxon>Haemophilus</taxon>
    </lineage>
</organism>